<gene>
    <name evidence="1" type="primary">cysG</name>
    <name type="ordered locus">Neut_1002</name>
</gene>
<evidence type="ECO:0000255" key="1">
    <source>
        <dbReference type="HAMAP-Rule" id="MF_01646"/>
    </source>
</evidence>
<comment type="function">
    <text evidence="1">Multifunctional enzyme that catalyzes the SAM-dependent methylations of uroporphyrinogen III at position C-2 and C-7 to form precorrin-2 via precorrin-1. Then it catalyzes the NAD-dependent ring dehydrogenation of precorrin-2 to yield sirohydrochlorin. Finally, it catalyzes the ferrochelation of sirohydrochlorin to yield siroheme.</text>
</comment>
<comment type="catalytic activity">
    <reaction evidence="1">
        <text>uroporphyrinogen III + 2 S-adenosyl-L-methionine = precorrin-2 + 2 S-adenosyl-L-homocysteine + H(+)</text>
        <dbReference type="Rhea" id="RHEA:32459"/>
        <dbReference type="ChEBI" id="CHEBI:15378"/>
        <dbReference type="ChEBI" id="CHEBI:57308"/>
        <dbReference type="ChEBI" id="CHEBI:57856"/>
        <dbReference type="ChEBI" id="CHEBI:58827"/>
        <dbReference type="ChEBI" id="CHEBI:59789"/>
        <dbReference type="EC" id="2.1.1.107"/>
    </reaction>
</comment>
<comment type="catalytic activity">
    <reaction evidence="1">
        <text>precorrin-2 + NAD(+) = sirohydrochlorin + NADH + 2 H(+)</text>
        <dbReference type="Rhea" id="RHEA:15613"/>
        <dbReference type="ChEBI" id="CHEBI:15378"/>
        <dbReference type="ChEBI" id="CHEBI:57540"/>
        <dbReference type="ChEBI" id="CHEBI:57945"/>
        <dbReference type="ChEBI" id="CHEBI:58351"/>
        <dbReference type="ChEBI" id="CHEBI:58827"/>
        <dbReference type="EC" id="1.3.1.76"/>
    </reaction>
</comment>
<comment type="catalytic activity">
    <reaction evidence="1">
        <text>siroheme + 2 H(+) = sirohydrochlorin + Fe(2+)</text>
        <dbReference type="Rhea" id="RHEA:24360"/>
        <dbReference type="ChEBI" id="CHEBI:15378"/>
        <dbReference type="ChEBI" id="CHEBI:29033"/>
        <dbReference type="ChEBI" id="CHEBI:58351"/>
        <dbReference type="ChEBI" id="CHEBI:60052"/>
        <dbReference type="EC" id="4.99.1.4"/>
    </reaction>
</comment>
<comment type="pathway">
    <text evidence="1">Cofactor biosynthesis; adenosylcobalamin biosynthesis; precorrin-2 from uroporphyrinogen III: step 1/1.</text>
</comment>
<comment type="pathway">
    <text evidence="1">Cofactor biosynthesis; adenosylcobalamin biosynthesis; sirohydrochlorin from precorrin-2: step 1/1.</text>
</comment>
<comment type="pathway">
    <text evidence="1">Porphyrin-containing compound metabolism; siroheme biosynthesis; precorrin-2 from uroporphyrinogen III: step 1/1.</text>
</comment>
<comment type="pathway">
    <text evidence="1">Porphyrin-containing compound metabolism; siroheme biosynthesis; siroheme from sirohydrochlorin: step 1/1.</text>
</comment>
<comment type="pathway">
    <text evidence="1">Porphyrin-containing compound metabolism; siroheme biosynthesis; sirohydrochlorin from precorrin-2: step 1/1.</text>
</comment>
<comment type="similarity">
    <text evidence="1">In the N-terminal section; belongs to the precorrin-2 dehydrogenase / sirohydrochlorin ferrochelatase family.</text>
</comment>
<comment type="similarity">
    <text evidence="1">In the C-terminal section; belongs to the precorrin methyltransferase family.</text>
</comment>
<dbReference type="EC" id="2.1.1.107" evidence="1"/>
<dbReference type="EC" id="1.3.1.76" evidence="1"/>
<dbReference type="EC" id="4.99.1.4" evidence="1"/>
<dbReference type="EMBL" id="CP000450">
    <property type="protein sequence ID" value="ABI59261.1"/>
    <property type="molecule type" value="Genomic_DNA"/>
</dbReference>
<dbReference type="RefSeq" id="WP_011634084.1">
    <property type="nucleotide sequence ID" value="NC_008344.1"/>
</dbReference>
<dbReference type="SMR" id="Q0AHC1"/>
<dbReference type="STRING" id="335283.Neut_1002"/>
<dbReference type="KEGG" id="net:Neut_1002"/>
<dbReference type="eggNOG" id="COG0007">
    <property type="taxonomic scope" value="Bacteria"/>
</dbReference>
<dbReference type="eggNOG" id="COG1648">
    <property type="taxonomic scope" value="Bacteria"/>
</dbReference>
<dbReference type="HOGENOM" id="CLU_011276_2_0_4"/>
<dbReference type="OrthoDB" id="9815856at2"/>
<dbReference type="UniPathway" id="UPA00148">
    <property type="reaction ID" value="UER00211"/>
</dbReference>
<dbReference type="UniPathway" id="UPA00148">
    <property type="reaction ID" value="UER00222"/>
</dbReference>
<dbReference type="UniPathway" id="UPA00262">
    <property type="reaction ID" value="UER00211"/>
</dbReference>
<dbReference type="UniPathway" id="UPA00262">
    <property type="reaction ID" value="UER00222"/>
</dbReference>
<dbReference type="UniPathway" id="UPA00262">
    <property type="reaction ID" value="UER00376"/>
</dbReference>
<dbReference type="Proteomes" id="UP000001966">
    <property type="component" value="Chromosome"/>
</dbReference>
<dbReference type="GO" id="GO:0051287">
    <property type="term" value="F:NAD binding"/>
    <property type="evidence" value="ECO:0007669"/>
    <property type="project" value="InterPro"/>
</dbReference>
<dbReference type="GO" id="GO:0043115">
    <property type="term" value="F:precorrin-2 dehydrogenase activity"/>
    <property type="evidence" value="ECO:0007669"/>
    <property type="project" value="UniProtKB-UniRule"/>
</dbReference>
<dbReference type="GO" id="GO:0051266">
    <property type="term" value="F:sirohydrochlorin ferrochelatase activity"/>
    <property type="evidence" value="ECO:0007669"/>
    <property type="project" value="UniProtKB-EC"/>
</dbReference>
<dbReference type="GO" id="GO:0004851">
    <property type="term" value="F:uroporphyrin-III C-methyltransferase activity"/>
    <property type="evidence" value="ECO:0007669"/>
    <property type="project" value="UniProtKB-UniRule"/>
</dbReference>
<dbReference type="GO" id="GO:0009236">
    <property type="term" value="P:cobalamin biosynthetic process"/>
    <property type="evidence" value="ECO:0007669"/>
    <property type="project" value="UniProtKB-UniRule"/>
</dbReference>
<dbReference type="GO" id="GO:0032259">
    <property type="term" value="P:methylation"/>
    <property type="evidence" value="ECO:0007669"/>
    <property type="project" value="UniProtKB-KW"/>
</dbReference>
<dbReference type="GO" id="GO:0019354">
    <property type="term" value="P:siroheme biosynthetic process"/>
    <property type="evidence" value="ECO:0007669"/>
    <property type="project" value="UniProtKB-UniRule"/>
</dbReference>
<dbReference type="CDD" id="cd11642">
    <property type="entry name" value="SUMT"/>
    <property type="match status" value="1"/>
</dbReference>
<dbReference type="FunFam" id="3.30.160.110:FF:000001">
    <property type="entry name" value="Siroheme synthase"/>
    <property type="match status" value="1"/>
</dbReference>
<dbReference type="FunFam" id="3.30.950.10:FF:000001">
    <property type="entry name" value="Siroheme synthase"/>
    <property type="match status" value="1"/>
</dbReference>
<dbReference type="FunFam" id="3.40.1010.10:FF:000001">
    <property type="entry name" value="Siroheme synthase"/>
    <property type="match status" value="1"/>
</dbReference>
<dbReference type="Gene3D" id="3.40.1010.10">
    <property type="entry name" value="Cobalt-precorrin-4 Transmethylase, Domain 1"/>
    <property type="match status" value="1"/>
</dbReference>
<dbReference type="Gene3D" id="3.30.950.10">
    <property type="entry name" value="Methyltransferase, Cobalt-precorrin-4 Transmethylase, Domain 2"/>
    <property type="match status" value="1"/>
</dbReference>
<dbReference type="Gene3D" id="3.40.50.720">
    <property type="entry name" value="NAD(P)-binding Rossmann-like Domain"/>
    <property type="match status" value="1"/>
</dbReference>
<dbReference type="Gene3D" id="1.10.8.210">
    <property type="entry name" value="Sirohaem synthase, dimerisation domain"/>
    <property type="match status" value="1"/>
</dbReference>
<dbReference type="Gene3D" id="3.30.160.110">
    <property type="entry name" value="Siroheme synthase, domain 2"/>
    <property type="match status" value="1"/>
</dbReference>
<dbReference type="HAMAP" id="MF_01646">
    <property type="entry name" value="Siroheme_synth"/>
    <property type="match status" value="1"/>
</dbReference>
<dbReference type="InterPro" id="IPR000878">
    <property type="entry name" value="4pyrrol_Mease"/>
</dbReference>
<dbReference type="InterPro" id="IPR035996">
    <property type="entry name" value="4pyrrol_Methylase_sf"/>
</dbReference>
<dbReference type="InterPro" id="IPR014777">
    <property type="entry name" value="4pyrrole_Mease_sub1"/>
</dbReference>
<dbReference type="InterPro" id="IPR014776">
    <property type="entry name" value="4pyrrole_Mease_sub2"/>
</dbReference>
<dbReference type="InterPro" id="IPR006366">
    <property type="entry name" value="CobA/CysG_C"/>
</dbReference>
<dbReference type="InterPro" id="IPR036291">
    <property type="entry name" value="NAD(P)-bd_dom_sf"/>
</dbReference>
<dbReference type="InterPro" id="IPR050161">
    <property type="entry name" value="Siro_Cobalamin_biosynth"/>
</dbReference>
<dbReference type="InterPro" id="IPR037115">
    <property type="entry name" value="Sirohaem_synt_dimer_dom_sf"/>
</dbReference>
<dbReference type="InterPro" id="IPR012409">
    <property type="entry name" value="Sirohaem_synth"/>
</dbReference>
<dbReference type="InterPro" id="IPR028281">
    <property type="entry name" value="Sirohaem_synthase_central"/>
</dbReference>
<dbReference type="InterPro" id="IPR019478">
    <property type="entry name" value="Sirohaem_synthase_dimer_dom"/>
</dbReference>
<dbReference type="InterPro" id="IPR006367">
    <property type="entry name" value="Sirohaem_synthase_N"/>
</dbReference>
<dbReference type="InterPro" id="IPR003043">
    <property type="entry name" value="Uropor_MeTrfase_CS"/>
</dbReference>
<dbReference type="NCBIfam" id="TIGR01469">
    <property type="entry name" value="cobA_cysG_Cterm"/>
    <property type="match status" value="1"/>
</dbReference>
<dbReference type="NCBIfam" id="TIGR01470">
    <property type="entry name" value="cysG_Nterm"/>
    <property type="match status" value="1"/>
</dbReference>
<dbReference type="NCBIfam" id="NF004790">
    <property type="entry name" value="PRK06136.1"/>
    <property type="match status" value="1"/>
</dbReference>
<dbReference type="NCBIfam" id="NF007922">
    <property type="entry name" value="PRK10637.1"/>
    <property type="match status" value="1"/>
</dbReference>
<dbReference type="PANTHER" id="PTHR45790:SF1">
    <property type="entry name" value="SIROHEME SYNTHASE"/>
    <property type="match status" value="1"/>
</dbReference>
<dbReference type="PANTHER" id="PTHR45790">
    <property type="entry name" value="SIROHEME SYNTHASE-RELATED"/>
    <property type="match status" value="1"/>
</dbReference>
<dbReference type="Pfam" id="PF10414">
    <property type="entry name" value="CysG_dimeriser"/>
    <property type="match status" value="1"/>
</dbReference>
<dbReference type="Pfam" id="PF13241">
    <property type="entry name" value="NAD_binding_7"/>
    <property type="match status" value="1"/>
</dbReference>
<dbReference type="Pfam" id="PF14824">
    <property type="entry name" value="Sirohm_synth_M"/>
    <property type="match status" value="1"/>
</dbReference>
<dbReference type="Pfam" id="PF00590">
    <property type="entry name" value="TP_methylase"/>
    <property type="match status" value="1"/>
</dbReference>
<dbReference type="PIRSF" id="PIRSF036426">
    <property type="entry name" value="Sirohaem_synth"/>
    <property type="match status" value="1"/>
</dbReference>
<dbReference type="SUPFAM" id="SSF51735">
    <property type="entry name" value="NAD(P)-binding Rossmann-fold domains"/>
    <property type="match status" value="1"/>
</dbReference>
<dbReference type="SUPFAM" id="SSF75615">
    <property type="entry name" value="Siroheme synthase middle domains-like"/>
    <property type="match status" value="1"/>
</dbReference>
<dbReference type="SUPFAM" id="SSF53790">
    <property type="entry name" value="Tetrapyrrole methylase"/>
    <property type="match status" value="1"/>
</dbReference>
<dbReference type="PROSITE" id="PS00840">
    <property type="entry name" value="SUMT_2"/>
    <property type="match status" value="1"/>
</dbReference>
<organism>
    <name type="scientific">Nitrosomonas eutropha (strain DSM 101675 / C91 / Nm57)</name>
    <dbReference type="NCBI Taxonomy" id="335283"/>
    <lineage>
        <taxon>Bacteria</taxon>
        <taxon>Pseudomonadati</taxon>
        <taxon>Pseudomonadota</taxon>
        <taxon>Betaproteobacteria</taxon>
        <taxon>Nitrosomonadales</taxon>
        <taxon>Nitrosomonadaceae</taxon>
        <taxon>Nitrosomonas</taxon>
    </lineage>
</organism>
<proteinExistence type="inferred from homology"/>
<reference key="1">
    <citation type="journal article" date="2007" name="Environ. Microbiol.">
        <title>Whole-genome analysis of the ammonia-oxidizing bacterium, Nitrosomonas eutropha C91: implications for niche adaptation.</title>
        <authorList>
            <person name="Stein L.Y."/>
            <person name="Arp D.J."/>
            <person name="Berube P.M."/>
            <person name="Chain P.S."/>
            <person name="Hauser L."/>
            <person name="Jetten M.S."/>
            <person name="Klotz M.G."/>
            <person name="Larimer F.W."/>
            <person name="Norton J.M."/>
            <person name="Op den Camp H.J.M."/>
            <person name="Shin M."/>
            <person name="Wei X."/>
        </authorList>
    </citation>
    <scope>NUCLEOTIDE SEQUENCE [LARGE SCALE GENOMIC DNA]</scope>
    <source>
        <strain>DSM 101675 / C91 / Nm57</strain>
    </source>
</reference>
<accession>Q0AHC1</accession>
<protein>
    <recommendedName>
        <fullName evidence="1">Siroheme synthase</fullName>
    </recommendedName>
    <domain>
        <recommendedName>
            <fullName evidence="1">Uroporphyrinogen-III C-methyltransferase</fullName>
            <shortName evidence="1">Urogen III methylase</shortName>
            <ecNumber evidence="1">2.1.1.107</ecNumber>
        </recommendedName>
        <alternativeName>
            <fullName evidence="1">SUMT</fullName>
        </alternativeName>
        <alternativeName>
            <fullName evidence="1">Uroporphyrinogen III methylase</fullName>
            <shortName evidence="1">UROM</shortName>
        </alternativeName>
    </domain>
    <domain>
        <recommendedName>
            <fullName evidence="1">Precorrin-2 dehydrogenase</fullName>
            <ecNumber evidence="1">1.3.1.76</ecNumber>
        </recommendedName>
    </domain>
    <domain>
        <recommendedName>
            <fullName evidence="1">Sirohydrochlorin ferrochelatase</fullName>
            <ecNumber evidence="1">4.99.1.4</ecNumber>
        </recommendedName>
    </domain>
</protein>
<keyword id="KW-0169">Cobalamin biosynthesis</keyword>
<keyword id="KW-0456">Lyase</keyword>
<keyword id="KW-0489">Methyltransferase</keyword>
<keyword id="KW-0511">Multifunctional enzyme</keyword>
<keyword id="KW-0520">NAD</keyword>
<keyword id="KW-0560">Oxidoreductase</keyword>
<keyword id="KW-0597">Phosphoprotein</keyword>
<keyword id="KW-0627">Porphyrin biosynthesis</keyword>
<keyword id="KW-0949">S-adenosyl-L-methionine</keyword>
<keyword id="KW-0808">Transferase</keyword>
<name>CYSG_NITEC</name>
<feature type="chain" id="PRO_0000330527" description="Siroheme synthase">
    <location>
        <begin position="1"/>
        <end position="476"/>
    </location>
</feature>
<feature type="region of interest" description="Precorrin-2 dehydrogenase /sirohydrochlorin ferrochelatase" evidence="1">
    <location>
        <begin position="1"/>
        <end position="204"/>
    </location>
</feature>
<feature type="region of interest" description="Uroporphyrinogen-III C-methyltransferase" evidence="1">
    <location>
        <begin position="218"/>
        <end position="476"/>
    </location>
</feature>
<feature type="active site" description="Proton acceptor" evidence="1">
    <location>
        <position position="250"/>
    </location>
</feature>
<feature type="active site" description="Proton donor" evidence="1">
    <location>
        <position position="272"/>
    </location>
</feature>
<feature type="binding site" evidence="1">
    <location>
        <begin position="22"/>
        <end position="23"/>
    </location>
    <ligand>
        <name>NAD(+)</name>
        <dbReference type="ChEBI" id="CHEBI:57540"/>
    </ligand>
</feature>
<feature type="binding site" evidence="1">
    <location>
        <begin position="43"/>
        <end position="44"/>
    </location>
    <ligand>
        <name>NAD(+)</name>
        <dbReference type="ChEBI" id="CHEBI:57540"/>
    </ligand>
</feature>
<feature type="binding site" evidence="1">
    <location>
        <position position="227"/>
    </location>
    <ligand>
        <name>S-adenosyl-L-methionine</name>
        <dbReference type="ChEBI" id="CHEBI:59789"/>
    </ligand>
</feature>
<feature type="binding site" evidence="1">
    <location>
        <begin position="303"/>
        <end position="305"/>
    </location>
    <ligand>
        <name>S-adenosyl-L-methionine</name>
        <dbReference type="ChEBI" id="CHEBI:59789"/>
    </ligand>
</feature>
<feature type="binding site" evidence="1">
    <location>
        <position position="308"/>
    </location>
    <ligand>
        <name>S-adenosyl-L-methionine</name>
        <dbReference type="ChEBI" id="CHEBI:59789"/>
    </ligand>
</feature>
<feature type="binding site" evidence="1">
    <location>
        <begin position="333"/>
        <end position="334"/>
    </location>
    <ligand>
        <name>S-adenosyl-L-methionine</name>
        <dbReference type="ChEBI" id="CHEBI:59789"/>
    </ligand>
</feature>
<feature type="binding site" evidence="1">
    <location>
        <position position="385"/>
    </location>
    <ligand>
        <name>S-adenosyl-L-methionine</name>
        <dbReference type="ChEBI" id="CHEBI:59789"/>
    </ligand>
</feature>
<feature type="binding site" evidence="1">
    <location>
        <position position="414"/>
    </location>
    <ligand>
        <name>S-adenosyl-L-methionine</name>
        <dbReference type="ChEBI" id="CHEBI:59789"/>
    </ligand>
</feature>
<feature type="modified residue" description="Phosphoserine" evidence="1">
    <location>
        <position position="129"/>
    </location>
</feature>
<sequence length="476" mass="52002">MDYFPVFLNIKQRNCLIVGGGSVAARKAKLLLRAGAHIHVVSPTINAEFTGLLQQFSSISHNAETFRPDHLQGRVLVIAATHDRATNQAVSVAARKAGIPVNVVDNPDLCTFIMPSILDRSPIIVAVSSGGGSPVLARLLRARLEALIPAAYGRLATYAAQFRGQVRQHFSRQENRRFFWEKMLQGPFAEMVFAGKDQAAQDYLLETLNNSVDQPPIGEVYLVGAGPGDPDLLTFRAMRLMQQADVVIYDRLVAPAILDMVRQDADRIYAGKERNRHTLPQTSINNLLIKLAQEGKRVLRLKGGDPFIFGRGGEEIETLSQHQIPFQVVPGITAASGVASYAGIPLTHRDYAHSCVFVTGHLKDNTVQLDWSALARPNQTIVVYMGLLGVSELCRQLIAHGLPKTTPAAIIQQGTTPNQCVLTGTLATLPTIIQENPLKPPTLIIVGEVVKLRQRLAWFNSTSESLGNTPGYSKHP</sequence>